<organism>
    <name type="scientific">Metallosphaera sedula (strain ATCC 51363 / DSM 5348 / JCM 9185 / NBRC 15509 / TH2)</name>
    <dbReference type="NCBI Taxonomy" id="399549"/>
    <lineage>
        <taxon>Archaea</taxon>
        <taxon>Thermoproteota</taxon>
        <taxon>Thermoprotei</taxon>
        <taxon>Sulfolobales</taxon>
        <taxon>Sulfolobaceae</taxon>
        <taxon>Metallosphaera</taxon>
    </lineage>
</organism>
<comment type="similarity">
    <text evidence="1">Belongs to the eukaryotic ribosomal protein eS17 family.</text>
</comment>
<keyword id="KW-1185">Reference proteome</keyword>
<keyword id="KW-0687">Ribonucleoprotein</keyword>
<keyword id="KW-0689">Ribosomal protein</keyword>
<feature type="chain" id="PRO_1000072471" description="Small ribosomal subunit protein eS17">
    <location>
        <begin position="1"/>
        <end position="76"/>
    </location>
</feature>
<evidence type="ECO:0000255" key="1">
    <source>
        <dbReference type="HAMAP-Rule" id="MF_00511"/>
    </source>
</evidence>
<evidence type="ECO:0000305" key="2"/>
<name>RS17E_METS5</name>
<reference key="1">
    <citation type="journal article" date="2008" name="Appl. Environ. Microbiol.">
        <title>The genome sequence of the metal-mobilizing, extremely thermoacidophilic archaeon Metallosphaera sedula provides insights into bioleaching-associated metabolism.</title>
        <authorList>
            <person name="Auernik K.S."/>
            <person name="Maezato Y."/>
            <person name="Blum P.H."/>
            <person name="Kelly R.M."/>
        </authorList>
    </citation>
    <scope>NUCLEOTIDE SEQUENCE [LARGE SCALE GENOMIC DNA]</scope>
    <source>
        <strain>ATCC 51363 / DSM 5348 / JCM 9185 / NBRC 15509 / TH2</strain>
    </source>
</reference>
<proteinExistence type="inferred from homology"/>
<dbReference type="EMBL" id="CP000682">
    <property type="protein sequence ID" value="ABP96398.1"/>
    <property type="molecule type" value="Genomic_DNA"/>
</dbReference>
<dbReference type="RefSeq" id="WP_012022185.1">
    <property type="nucleotide sequence ID" value="NZ_CP139956.1"/>
</dbReference>
<dbReference type="SMR" id="A4YIZ6"/>
<dbReference type="STRING" id="399549.Msed_2260"/>
<dbReference type="KEGG" id="mse:Msed_2260"/>
<dbReference type="eggNOG" id="arCOG01885">
    <property type="taxonomic scope" value="Archaea"/>
</dbReference>
<dbReference type="HOGENOM" id="CLU_176720_0_0_2"/>
<dbReference type="Proteomes" id="UP000000242">
    <property type="component" value="Chromosome"/>
</dbReference>
<dbReference type="GO" id="GO:0005829">
    <property type="term" value="C:cytosol"/>
    <property type="evidence" value="ECO:0007669"/>
    <property type="project" value="UniProtKB-ARBA"/>
</dbReference>
<dbReference type="GO" id="GO:1990904">
    <property type="term" value="C:ribonucleoprotein complex"/>
    <property type="evidence" value="ECO:0007669"/>
    <property type="project" value="UniProtKB-KW"/>
</dbReference>
<dbReference type="GO" id="GO:0005840">
    <property type="term" value="C:ribosome"/>
    <property type="evidence" value="ECO:0007669"/>
    <property type="project" value="UniProtKB-KW"/>
</dbReference>
<dbReference type="GO" id="GO:0003735">
    <property type="term" value="F:structural constituent of ribosome"/>
    <property type="evidence" value="ECO:0007669"/>
    <property type="project" value="InterPro"/>
</dbReference>
<dbReference type="GO" id="GO:0006412">
    <property type="term" value="P:translation"/>
    <property type="evidence" value="ECO:0007669"/>
    <property type="project" value="UniProtKB-UniRule"/>
</dbReference>
<dbReference type="Gene3D" id="1.10.60.20">
    <property type="entry name" value="Ribosomal protein S17e-like"/>
    <property type="match status" value="1"/>
</dbReference>
<dbReference type="HAMAP" id="MF_00511">
    <property type="entry name" value="Ribosomal_eS17"/>
    <property type="match status" value="1"/>
</dbReference>
<dbReference type="InterPro" id="IPR001210">
    <property type="entry name" value="Ribosomal_eS17"/>
</dbReference>
<dbReference type="InterPro" id="IPR018273">
    <property type="entry name" value="Ribosomal_eS17_CS"/>
</dbReference>
<dbReference type="InterPro" id="IPR036401">
    <property type="entry name" value="Ribosomal_eS17_sf"/>
</dbReference>
<dbReference type="NCBIfam" id="NF002242">
    <property type="entry name" value="PRK01151.1"/>
    <property type="match status" value="1"/>
</dbReference>
<dbReference type="PANTHER" id="PTHR10732">
    <property type="entry name" value="40S RIBOSOMAL PROTEIN S17"/>
    <property type="match status" value="1"/>
</dbReference>
<dbReference type="PANTHER" id="PTHR10732:SF0">
    <property type="entry name" value="40S RIBOSOMAL PROTEIN S17"/>
    <property type="match status" value="1"/>
</dbReference>
<dbReference type="Pfam" id="PF00833">
    <property type="entry name" value="Ribosomal_S17e"/>
    <property type="match status" value="1"/>
</dbReference>
<dbReference type="SUPFAM" id="SSF116820">
    <property type="entry name" value="Rps17e-like"/>
    <property type="match status" value="1"/>
</dbReference>
<dbReference type="PROSITE" id="PS00712">
    <property type="entry name" value="RIBOSOMAL_S17E"/>
    <property type="match status" value="1"/>
</dbReference>
<accession>A4YIZ6</accession>
<protein>
    <recommendedName>
        <fullName evidence="1">Small ribosomal subunit protein eS17</fullName>
    </recommendedName>
    <alternativeName>
        <fullName evidence="2">30S ribosomal protein S17e</fullName>
    </alternativeName>
</protein>
<sequence>MGNIYTRDIKRIGQQIYELYKDQITTDYEKNKELVKQVVDVYSKKVRNRIAGYITRKAKQASRPVEVTEQQEELEE</sequence>
<gene>
    <name evidence="1" type="primary">rps17e</name>
    <name type="ordered locus">Msed_2260</name>
</gene>